<accession>Q58T42</accession>
<keyword id="KW-0027">Amidation</keyword>
<keyword id="KW-0878">Amphibian defense peptide</keyword>
<keyword id="KW-0044">Antibiotic</keyword>
<keyword id="KW-0929">Antimicrobial</keyword>
<keyword id="KW-0165">Cleavage on pair of basic residues</keyword>
<keyword id="KW-0204">Cytolysis</keyword>
<keyword id="KW-0903">Direct protein sequencing</keyword>
<keyword id="KW-0295">Fungicide</keyword>
<keyword id="KW-0354">Hemolysis</keyword>
<keyword id="KW-0964">Secreted</keyword>
<keyword id="KW-0732">Signal</keyword>
<reference key="1">
    <citation type="journal article" date="2005" name="Eur. J. Immunol.">
        <title>Variety of antimicrobial peptides in the Bombina maxima toad and evidence of their rapid diversification.</title>
        <authorList>
            <person name="Lee W.-H."/>
            <person name="Li Y."/>
            <person name="Lai R."/>
            <person name="Li S."/>
            <person name="Zhang Y."/>
            <person name="Wang W."/>
        </authorList>
    </citation>
    <scope>NUCLEOTIDE SEQUENCE [MRNA]</scope>
    <scope>AMIDATION AT ASN-70 AND ILE-138</scope>
    <source>
        <tissue>Skin</tissue>
    </source>
</reference>
<reference key="2">
    <citation type="submission" date="2001-07" db="UniProtKB">
        <title>Isolation and structural characterisation of antimicrobial peptides from the venom of the Chinese large-webbed bell toad (Bombina maxima).</title>
        <authorList>
            <person name="Chen T.B."/>
            <person name="McClean S."/>
            <person name="Orr D.F."/>
            <person name="Bjourson A.J."/>
            <person name="Rao P.F."/>
            <person name="Shaw C."/>
        </authorList>
    </citation>
    <scope>PROTEIN SEQUENCE OF 44-70</scope>
    <scope>FUNCTION OF MAXIMIN-4</scope>
    <scope>SUBCELLULAR LOCATION</scope>
    <scope>TISSUE SPECIFICITY</scope>
    <source>
        <tissue>Skin secretion</tissue>
    </source>
</reference>
<reference key="3">
    <citation type="journal article" date="2002" name="Peptides">
        <title>Antimicrobial peptides from skin secretions of Chinese red belly toad Bombina maxima.</title>
        <authorList>
            <person name="Lai R."/>
            <person name="Zheng Y.-T."/>
            <person name="Shen J.-H."/>
            <person name="Liu G.-J."/>
            <person name="Liu H."/>
            <person name="Lee W.-H."/>
            <person name="Tang S.-Z."/>
            <person name="Zhang Y."/>
        </authorList>
    </citation>
    <scope>PROTEIN SEQUENCE OF 44-70 AND 119-138</scope>
    <scope>AMIDATION AT ASN-70 AND ILE-138</scope>
    <scope>FUNCTION OF MAXIMIN-4 AND MAXIMIN-H3</scope>
    <scope>MASS SPECTROMETRY</scope>
    <source>
        <tissue>Skin</tissue>
        <tissue>Skin secretion</tissue>
    </source>
</reference>
<feature type="signal peptide" evidence="1">
    <location>
        <begin position="1"/>
        <end position="18"/>
    </location>
</feature>
<feature type="propeptide" id="PRO_0000003164">
    <location>
        <begin position="19"/>
        <end position="43"/>
    </location>
</feature>
<feature type="peptide" id="PRO_0000003165" description="Maximin-4">
    <location>
        <begin position="44"/>
        <end position="70"/>
    </location>
</feature>
<feature type="propeptide" id="PRO_0000003166" evidence="2">
    <location>
        <begin position="74"/>
        <end position="118"/>
    </location>
</feature>
<feature type="peptide" id="PRO_0000003167" description="Maximin-H3">
    <location>
        <begin position="119"/>
        <end position="138"/>
    </location>
</feature>
<feature type="modified residue" description="Asparagine amide" evidence="2 3">
    <location>
        <position position="70"/>
    </location>
</feature>
<feature type="modified residue" description="Isoleucine amide" evidence="2 3">
    <location>
        <position position="138"/>
    </location>
</feature>
<sequence>MNFKYIIAVSFLIASAYARSVQNDEQSLSQRDVLEEESLREIRGIGGVLLSAGKAALKGLAKVLAEKYANGKRTAEEHEVMKRLEAVMRDLDSLDHPEEASERETRGFNQDEIAKEKRILGPVLGLVGNALGGLIKKIG</sequence>
<organism>
    <name type="scientific">Bombina maxima</name>
    <name type="common">Giant fire-bellied toad</name>
    <name type="synonym">Chinese red belly toad</name>
    <dbReference type="NCBI Taxonomy" id="161274"/>
    <lineage>
        <taxon>Eukaryota</taxon>
        <taxon>Metazoa</taxon>
        <taxon>Chordata</taxon>
        <taxon>Craniata</taxon>
        <taxon>Vertebrata</taxon>
        <taxon>Euteleostomi</taxon>
        <taxon>Amphibia</taxon>
        <taxon>Batrachia</taxon>
        <taxon>Anura</taxon>
        <taxon>Bombinatoridae</taxon>
        <taxon>Bombina</taxon>
    </lineage>
</organism>
<evidence type="ECO:0000255" key="1"/>
<evidence type="ECO:0000269" key="2">
    <source>
    </source>
</evidence>
<evidence type="ECO:0000269" key="3">
    <source>
    </source>
</evidence>
<evidence type="ECO:0000269" key="4">
    <source ref="2"/>
</evidence>
<evidence type="ECO:0000305" key="5"/>
<name>M4H34_BOMMX</name>
<dbReference type="EMBL" id="AY849018">
    <property type="protein sequence ID" value="AAX50239.1"/>
    <property type="molecule type" value="mRNA"/>
</dbReference>
<dbReference type="SMR" id="Q58T42"/>
<dbReference type="GO" id="GO:0005576">
    <property type="term" value="C:extracellular region"/>
    <property type="evidence" value="ECO:0007669"/>
    <property type="project" value="UniProtKB-SubCell"/>
</dbReference>
<dbReference type="GO" id="GO:0042742">
    <property type="term" value="P:defense response to bacterium"/>
    <property type="evidence" value="ECO:0007669"/>
    <property type="project" value="UniProtKB-KW"/>
</dbReference>
<dbReference type="GO" id="GO:0050832">
    <property type="term" value="P:defense response to fungus"/>
    <property type="evidence" value="ECO:0007669"/>
    <property type="project" value="UniProtKB-KW"/>
</dbReference>
<dbReference type="GO" id="GO:0031640">
    <property type="term" value="P:killing of cells of another organism"/>
    <property type="evidence" value="ECO:0007669"/>
    <property type="project" value="UniProtKB-KW"/>
</dbReference>
<dbReference type="InterPro" id="IPR007962">
    <property type="entry name" value="Bombinin"/>
</dbReference>
<dbReference type="Pfam" id="PF05298">
    <property type="entry name" value="Bombinin"/>
    <property type="match status" value="1"/>
</dbReference>
<comment type="function">
    <text>Maximin-4 shows antibacterial activity against both Gram-positive and Gram-negative bacteria. It also shows antimicrobial activity against the fungus C.albicans, but not against A.flavus nor P.uticale. It has little hemolytic activity. It does not possess a significant cytotoxicity against tumor cell lines. It does not possess a significant anti-HIV activity.</text>
</comment>
<comment type="function">
    <text>Maximin-H3 shows antibacterial activity against both Gram-positive and Gram-negative bacteria. It also shows antimicrobial activity against the fungus C.albicans. Shows strong hemolytic activity.</text>
</comment>
<comment type="subcellular location">
    <subcellularLocation>
        <location evidence="4">Secreted</location>
    </subcellularLocation>
</comment>
<comment type="tissue specificity">
    <text evidence="4">Expressed by the skin glands.</text>
</comment>
<comment type="mass spectrometry">
    <molecule>Maximin-4</molecule>
</comment>
<comment type="mass spectrometry">
    <molecule>Maximin-H3</molecule>
</comment>
<comment type="similarity">
    <text evidence="5">Belongs to the bombinin family.</text>
</comment>
<protein>
    <recommendedName>
        <fullName>Maximins 4/H3 type 4</fullName>
    </recommendedName>
    <component>
        <recommendedName>
            <fullName>Maximin-4</fullName>
        </recommendedName>
    </component>
    <component>
        <recommendedName>
            <fullName>Maximin-H3</fullName>
        </recommendedName>
    </component>
</protein>
<proteinExistence type="evidence at protein level"/>